<feature type="chain" id="PRO_0000214385" description="UPF0114 protein in repA1-repA2 intergenic region">
    <location>
        <begin position="1"/>
        <end position="167"/>
    </location>
</feature>
<feature type="transmembrane region" description="Helical" evidence="1">
    <location>
        <begin position="15"/>
        <end position="35"/>
    </location>
</feature>
<feature type="transmembrane region" description="Helical" evidence="1">
    <location>
        <begin position="53"/>
        <end position="73"/>
    </location>
</feature>
<feature type="transmembrane region" description="Helical" evidence="1">
    <location>
        <begin position="136"/>
        <end position="156"/>
    </location>
</feature>
<reference key="1">
    <citation type="journal article" date="1999" name="J. Mol. Evol.">
        <title>Genetic characterization of plasmids containing genes encoding enzymes of leucine biosynthesis in endosymbionts (Buchnera) of aphids.</title>
        <authorList>
            <person name="Baumann L."/>
            <person name="Baumann P."/>
            <person name="Moran N.A."/>
            <person name="Sandstroem J.P."/>
            <person name="Thao M.L."/>
        </authorList>
    </citation>
    <scope>NUCLEOTIDE SEQUENCE [GENOMIC DNA]</scope>
</reference>
<sequence length="167" mass="18951">MERIIEKAIYASRWLMFPVYVGLSFGFILLTLKFFQQIVFIIPDILAMSESGLVLVVLSLIDIALVGGLLVMVMFLGYENFISKMDIQDNEKRLGWMGTMDVNSIKNKVASSIVAISSVHLLRLFMEAEKILDDKIMLCVIIHLTFVLSAFGMAYIDKMSKKKHVLH</sequence>
<proteinExistence type="inferred from homology"/>
<protein>
    <recommendedName>
        <fullName>UPF0114 protein in repA1-repA2 intergenic region</fullName>
    </recommendedName>
</protein>
<organism>
    <name type="scientific">Buchnera aphidicola subsp. Diuraphis noxia</name>
    <dbReference type="NCBI Taxonomy" id="118101"/>
    <lineage>
        <taxon>Bacteria</taxon>
        <taxon>Pseudomonadati</taxon>
        <taxon>Pseudomonadota</taxon>
        <taxon>Gammaproteobacteria</taxon>
        <taxon>Enterobacterales</taxon>
        <taxon>Erwiniaceae</taxon>
        <taxon>Buchnera</taxon>
    </lineage>
</organism>
<name>YREP_BUCDN</name>
<accession>O85068</accession>
<evidence type="ECO:0000255" key="1"/>
<evidence type="ECO:0000305" key="2"/>
<keyword id="KW-1003">Cell membrane</keyword>
<keyword id="KW-0472">Membrane</keyword>
<keyword id="KW-0614">Plasmid</keyword>
<keyword id="KW-0812">Transmembrane</keyword>
<keyword id="KW-1133">Transmembrane helix</keyword>
<dbReference type="EMBL" id="AF041837">
    <property type="protein sequence ID" value="AAD12598.1"/>
    <property type="molecule type" value="Genomic_DNA"/>
</dbReference>
<dbReference type="RefSeq" id="NP_047185.1">
    <property type="nucleotide sequence ID" value="NC_001911.1"/>
</dbReference>
<dbReference type="SMR" id="O85068"/>
<dbReference type="GO" id="GO:0005886">
    <property type="term" value="C:plasma membrane"/>
    <property type="evidence" value="ECO:0007669"/>
    <property type="project" value="UniProtKB-SubCell"/>
</dbReference>
<dbReference type="HAMAP" id="MF_00143">
    <property type="entry name" value="UPF0114"/>
    <property type="match status" value="1"/>
</dbReference>
<dbReference type="InterPro" id="IPR005134">
    <property type="entry name" value="UPF0114"/>
</dbReference>
<dbReference type="InterPro" id="IPR020761">
    <property type="entry name" value="UPF0114_bac"/>
</dbReference>
<dbReference type="NCBIfam" id="TIGR00645">
    <property type="entry name" value="HI0507"/>
    <property type="match status" value="1"/>
</dbReference>
<dbReference type="PANTHER" id="PTHR38596">
    <property type="entry name" value="UPF0114 PROTEIN YQHA"/>
    <property type="match status" value="1"/>
</dbReference>
<dbReference type="PANTHER" id="PTHR38596:SF1">
    <property type="entry name" value="UPF0114 PROTEIN YQHA"/>
    <property type="match status" value="1"/>
</dbReference>
<dbReference type="Pfam" id="PF03350">
    <property type="entry name" value="UPF0114"/>
    <property type="match status" value="1"/>
</dbReference>
<geneLocation type="plasmid">
    <name>pLeu-Dn</name>
    <name>pBDn1</name>
</geneLocation>
<comment type="subcellular location">
    <subcellularLocation>
        <location evidence="2">Cell membrane</location>
        <topology evidence="2">Multi-pass membrane protein</topology>
    </subcellularLocation>
</comment>
<comment type="similarity">
    <text evidence="2">Belongs to the UPF0114 family.</text>
</comment>